<accession>Q6BWF6</accession>
<dbReference type="EMBL" id="CR382134">
    <property type="protein sequence ID" value="CAG85467.1"/>
    <property type="molecule type" value="Genomic_DNA"/>
</dbReference>
<dbReference type="RefSeq" id="XP_457463.1">
    <property type="nucleotide sequence ID" value="XM_457463.1"/>
</dbReference>
<dbReference type="SMR" id="Q6BWF6"/>
<dbReference type="FunCoup" id="Q6BWF6">
    <property type="interactions" value="299"/>
</dbReference>
<dbReference type="STRING" id="284592.Q6BWF6"/>
<dbReference type="GeneID" id="2913398"/>
<dbReference type="KEGG" id="dha:DEHA2B11726g"/>
<dbReference type="VEuPathDB" id="FungiDB:DEHA2B11726g"/>
<dbReference type="eggNOG" id="ENOG502SG7T">
    <property type="taxonomic scope" value="Eukaryota"/>
</dbReference>
<dbReference type="HOGENOM" id="CLU_130538_0_0_1"/>
<dbReference type="InParanoid" id="Q6BWF6"/>
<dbReference type="OMA" id="SSQYFHC"/>
<dbReference type="OrthoDB" id="21557at2759"/>
<dbReference type="Proteomes" id="UP000000599">
    <property type="component" value="Chromosome B"/>
</dbReference>
<dbReference type="GO" id="GO:0071819">
    <property type="term" value="C:DUBm complex"/>
    <property type="evidence" value="ECO:0007669"/>
    <property type="project" value="UniProtKB-UniRule"/>
</dbReference>
<dbReference type="GO" id="GO:0000124">
    <property type="term" value="C:SAGA complex"/>
    <property type="evidence" value="ECO:0007669"/>
    <property type="project" value="UniProtKB-UniRule"/>
</dbReference>
<dbReference type="GO" id="GO:0003713">
    <property type="term" value="F:transcription coactivator activity"/>
    <property type="evidence" value="ECO:0007669"/>
    <property type="project" value="UniProtKB-UniRule"/>
</dbReference>
<dbReference type="GO" id="GO:0008270">
    <property type="term" value="F:zinc ion binding"/>
    <property type="evidence" value="ECO:0007669"/>
    <property type="project" value="UniProtKB-UniRule"/>
</dbReference>
<dbReference type="GO" id="GO:0006325">
    <property type="term" value="P:chromatin organization"/>
    <property type="evidence" value="ECO:0007669"/>
    <property type="project" value="UniProtKB-KW"/>
</dbReference>
<dbReference type="Gene3D" id="3.30.160.60">
    <property type="entry name" value="Classic Zinc Finger"/>
    <property type="match status" value="1"/>
</dbReference>
<dbReference type="HAMAP" id="MF_03047">
    <property type="entry name" value="Sgf11"/>
    <property type="match status" value="1"/>
</dbReference>
<dbReference type="InterPro" id="IPR013246">
    <property type="entry name" value="SAGA_su_Sgf11"/>
</dbReference>
<dbReference type="Pfam" id="PF08209">
    <property type="entry name" value="Sgf11"/>
    <property type="match status" value="1"/>
</dbReference>
<proteinExistence type="inferred from homology"/>
<organism>
    <name type="scientific">Debaryomyces hansenii (strain ATCC 36239 / CBS 767 / BCRC 21394 / JCM 1990 / NBRC 0083 / IGC 2968)</name>
    <name type="common">Yeast</name>
    <name type="synonym">Torulaspora hansenii</name>
    <dbReference type="NCBI Taxonomy" id="284592"/>
    <lineage>
        <taxon>Eukaryota</taxon>
        <taxon>Fungi</taxon>
        <taxon>Dikarya</taxon>
        <taxon>Ascomycota</taxon>
        <taxon>Saccharomycotina</taxon>
        <taxon>Pichiomycetes</taxon>
        <taxon>Debaryomycetaceae</taxon>
        <taxon>Debaryomyces</taxon>
    </lineage>
</organism>
<reference key="1">
    <citation type="journal article" date="2004" name="Nature">
        <title>Genome evolution in yeasts.</title>
        <authorList>
            <person name="Dujon B."/>
            <person name="Sherman D."/>
            <person name="Fischer G."/>
            <person name="Durrens P."/>
            <person name="Casaregola S."/>
            <person name="Lafontaine I."/>
            <person name="de Montigny J."/>
            <person name="Marck C."/>
            <person name="Neuveglise C."/>
            <person name="Talla E."/>
            <person name="Goffard N."/>
            <person name="Frangeul L."/>
            <person name="Aigle M."/>
            <person name="Anthouard V."/>
            <person name="Babour A."/>
            <person name="Barbe V."/>
            <person name="Barnay S."/>
            <person name="Blanchin S."/>
            <person name="Beckerich J.-M."/>
            <person name="Beyne E."/>
            <person name="Bleykasten C."/>
            <person name="Boisrame A."/>
            <person name="Boyer J."/>
            <person name="Cattolico L."/>
            <person name="Confanioleri F."/>
            <person name="de Daruvar A."/>
            <person name="Despons L."/>
            <person name="Fabre E."/>
            <person name="Fairhead C."/>
            <person name="Ferry-Dumazet H."/>
            <person name="Groppi A."/>
            <person name="Hantraye F."/>
            <person name="Hennequin C."/>
            <person name="Jauniaux N."/>
            <person name="Joyet P."/>
            <person name="Kachouri R."/>
            <person name="Kerrest A."/>
            <person name="Koszul R."/>
            <person name="Lemaire M."/>
            <person name="Lesur I."/>
            <person name="Ma L."/>
            <person name="Muller H."/>
            <person name="Nicaud J.-M."/>
            <person name="Nikolski M."/>
            <person name="Oztas S."/>
            <person name="Ozier-Kalogeropoulos O."/>
            <person name="Pellenz S."/>
            <person name="Potier S."/>
            <person name="Richard G.-F."/>
            <person name="Straub M.-L."/>
            <person name="Suleau A."/>
            <person name="Swennen D."/>
            <person name="Tekaia F."/>
            <person name="Wesolowski-Louvel M."/>
            <person name="Westhof E."/>
            <person name="Wirth B."/>
            <person name="Zeniou-Meyer M."/>
            <person name="Zivanovic Y."/>
            <person name="Bolotin-Fukuhara M."/>
            <person name="Thierry A."/>
            <person name="Bouchier C."/>
            <person name="Caudron B."/>
            <person name="Scarpelli C."/>
            <person name="Gaillardin C."/>
            <person name="Weissenbach J."/>
            <person name="Wincker P."/>
            <person name="Souciet J.-L."/>
        </authorList>
    </citation>
    <scope>NUCLEOTIDE SEQUENCE [LARGE SCALE GENOMIC DNA]</scope>
    <source>
        <strain>ATCC 36239 / CBS 767 / BCRC 21394 / JCM 1990 / NBRC 0083 / IGC 2968</strain>
    </source>
</reference>
<sequence>MTEKPVTYQSLDMLDNILRQQTLASVSRYRSLKSTLGENEKKSVFIDDIMSSSKDIYGQDKQKLKVSETSKYFQCENCGRSIAGGRFAQHMTKCLERRRK</sequence>
<feature type="chain" id="PRO_0000367539" description="SAGA-associated factor 11">
    <location>
        <begin position="1"/>
        <end position="100"/>
    </location>
</feature>
<feature type="zinc finger region" description="SGF11-type" evidence="1">
    <location>
        <begin position="73"/>
        <end position="94"/>
    </location>
</feature>
<keyword id="KW-0010">Activator</keyword>
<keyword id="KW-0156">Chromatin regulator</keyword>
<keyword id="KW-0479">Metal-binding</keyword>
<keyword id="KW-0539">Nucleus</keyword>
<keyword id="KW-1185">Reference proteome</keyword>
<keyword id="KW-0804">Transcription</keyword>
<keyword id="KW-0805">Transcription regulation</keyword>
<keyword id="KW-0862">Zinc</keyword>
<keyword id="KW-0863">Zinc-finger</keyword>
<evidence type="ECO:0000255" key="1">
    <source>
        <dbReference type="HAMAP-Rule" id="MF_03047"/>
    </source>
</evidence>
<protein>
    <recommendedName>
        <fullName evidence="1">SAGA-associated factor 11</fullName>
    </recommendedName>
</protein>
<comment type="function">
    <text evidence="1">Functions as a component of the transcription regulatory histone acetylation (HAT) complex SAGA. At the promoters, SAGA is required for recruitment of the basal transcription machinery. It influences RNA polymerase II transcriptional activity through different activities such as TBP interaction and promoter selectivity, interaction with transcription activators, and chromatin modification through histone acetylation and deubiquitination. SAGA acetylates nucleosomal histone H3 to some extent (to form H3K9ac, H3K14ac, H3K18ac and H3K23ac). SAGA interacts with DNA via upstream activating sequences (UASs). Involved in transcriptional regulation of a subset of SAGA-regulated genes. Within the SAGA complex, participates in a subcomplex, that specifically deubiquitinates histones H2B.</text>
</comment>
<comment type="subunit">
    <text evidence="1">Component of the 1.8 MDa SAGA transcription coactivator-HAT complex. SAGA is built of 5 distinct domains with specialized functions. Within the SAGA complex, SUS1, SGF11, SGF73 and UBP8 form an additional subcomplex of SAGA called the DUB module (deubiquitination module). Interacts directly with SGF73, SUS1 and UBP8.</text>
</comment>
<comment type="subcellular location">
    <subcellularLocation>
        <location evidence="1">Nucleus</location>
    </subcellularLocation>
</comment>
<comment type="domain">
    <text evidence="1">The long N-terminal helix forms part of the 'assembly lobe' of the SAGA deubiquitination module.</text>
</comment>
<comment type="domain">
    <text evidence="1">The C-terminal SGF11-type zinc-finger domain together with the C-terminal catalytic domain of UBP8 forms the 'catalytic lobe' of the SAGA deubiquitination module.</text>
</comment>
<comment type="similarity">
    <text evidence="1">Belongs to the SGF11 family.</text>
</comment>
<name>SGF11_DEBHA</name>
<gene>
    <name evidence="1" type="primary">SGF11</name>
    <name type="ordered locus">DEHA2B11726g</name>
</gene>